<sequence length="1069" mass="122133">MALDGELGEQEEEKKKKKKKKRKKKKEEEEEEEGAEKSSSPFAAAMGEDDAALRAGSRGLSDPWADSVGVRPRTTERHIAVHKRLVLAFAVSLVALLAVTMLAVLLSLRFDECGASATPGADGGPSGFPERGGNGSLPGSARRNHHAGGDSWQPEAGGVASPGTTSAQPPSEEEREPWEPWTQLRLSGHLKPLHYNLMLTAFMENFTFSGEVNVEIACRNATRYVVLHASRVAVEKVQLAEDRAFGAVPVAGFFLYPQTQVLVVVLNRTLDAQRNYNLKIIYNALIENELLGFFRSSYVLHGERRFLGVTQFSPTHARKAFPCFDEPIYKATFKISIKHQATYLSLSNMPVETSVFEEDGWVTDHFSQTPLMSTYYLAWAICNFTYRETTTKSGVVVRLYARPDAIRRGSGDYALHITKRLIEFYEDYFKVPYSLPKLDLLAVPKHPYAAMENWGLSIFVEQRILLDPSVSSISYLLDVTMVIVHEICHQWFGDLVTPVWWEDVWLKEGFAHYFEFVGTDYLYPGWNMEKQRFLTDVLHEVMLLDGLASSHPVSQEVLQATDIDRVFDWIAYKKGAALIRMLANFMGHSVFQRGLQDYLTIHKYGNAARNDLWNTLSEALKRNGKYVNIQEVMDQWTLQMGYPVITILGNTTAENRIIITQQHFIYDISAKTKALKLQNNSYLWQIPLTIVVGNRSHVSSEAIIWVSNKSEHHRITYLDKGSWLLGNINQTGYFRVNYDLRNWRLLIDQLIRNHEVLSVSNRAGLIDDAFSLARAGYLPQNIPLEIIRYLSEEKDFLPWHAASRALYPLDKLLDRMENYNIFNEYILKQVATTYIKLGWPKNNFNGSLVQASYQHEELRREVIMLACSFGNKHCHQQASTLISDWISSNRNRIPLNVRDIVYCTGVSLLDEDVWEFIWMKFHSTTAVSEKKILLEALTCSDDRNLLNRLLNLSLNSEVVLDQDAIDVIIHVARNPHGRDLAWKFFRDKWKILNTRYGEALFMNSKLISGVTEFLNTEGELKELKNFMKNYDGVAAASFSRAVETVEANVRWKMLYQDELFQWLGKALRH</sequence>
<proteinExistence type="evidence at protein level"/>
<gene>
    <name type="primary">TRHDE</name>
    <name type="ORF">UNQ2507/PRO5995</name>
</gene>
<feature type="chain" id="PRO_0000095118" description="Thyrotropin-releasing hormone-degrading ectoenzyme">
    <location>
        <begin position="1"/>
        <end position="1069"/>
    </location>
</feature>
<feature type="topological domain" description="Cytoplasmic" evidence="2">
    <location>
        <begin position="1"/>
        <end position="85"/>
    </location>
</feature>
<feature type="transmembrane region" description="Helical; Signal-anchor for type II membrane protein" evidence="2">
    <location>
        <begin position="86"/>
        <end position="106"/>
    </location>
</feature>
<feature type="topological domain" description="Extracellular" evidence="2">
    <location>
        <begin position="107"/>
        <end position="1069"/>
    </location>
</feature>
<feature type="region of interest" description="Disordered" evidence="4">
    <location>
        <begin position="1"/>
        <end position="46"/>
    </location>
</feature>
<feature type="region of interest" description="Disordered" evidence="4">
    <location>
        <begin position="117"/>
        <end position="179"/>
    </location>
</feature>
<feature type="compositionally biased region" description="Acidic residues" evidence="4">
    <location>
        <begin position="1"/>
        <end position="11"/>
    </location>
</feature>
<feature type="compositionally biased region" description="Basic residues" evidence="4">
    <location>
        <begin position="15"/>
        <end position="25"/>
    </location>
</feature>
<feature type="compositionally biased region" description="Gly residues" evidence="4">
    <location>
        <begin position="121"/>
        <end position="136"/>
    </location>
</feature>
<feature type="active site" description="Proton acceptor" evidence="3">
    <location>
        <position position="486"/>
    </location>
</feature>
<feature type="binding site" evidence="1">
    <location>
        <begin position="449"/>
        <end position="453"/>
    </location>
    <ligand>
        <name>substrate</name>
    </ligand>
</feature>
<feature type="binding site" evidence="3">
    <location>
        <position position="485"/>
    </location>
    <ligand>
        <name>Zn(2+)</name>
        <dbReference type="ChEBI" id="CHEBI:29105"/>
        <note>catalytic</note>
    </ligand>
</feature>
<feature type="binding site" evidence="3">
    <location>
        <position position="489"/>
    </location>
    <ligand>
        <name>Zn(2+)</name>
        <dbReference type="ChEBI" id="CHEBI:29105"/>
        <note>catalytic</note>
    </ligand>
</feature>
<feature type="binding site" evidence="3">
    <location>
        <position position="508"/>
    </location>
    <ligand>
        <name>Zn(2+)</name>
        <dbReference type="ChEBI" id="CHEBI:29105"/>
        <note>catalytic</note>
    </ligand>
</feature>
<feature type="site" description="Transition state stabilizer" evidence="1">
    <location>
        <position position="572"/>
    </location>
</feature>
<feature type="glycosylation site" description="N-linked (GlcNAc...) asparagine" evidence="2">
    <location>
        <position position="134"/>
    </location>
</feature>
<feature type="glycosylation site" description="N-linked (GlcNAc...) asparagine" evidence="2">
    <location>
        <position position="205"/>
    </location>
</feature>
<feature type="glycosylation site" description="N-linked (GlcNAc...) asparagine" evidence="2">
    <location>
        <position position="220"/>
    </location>
</feature>
<feature type="glycosylation site" description="N-linked (GlcNAc...) asparagine" evidence="2">
    <location>
        <position position="267"/>
    </location>
</feature>
<feature type="glycosylation site" description="N-linked (GlcNAc...) asparagine" evidence="2">
    <location>
        <position position="383"/>
    </location>
</feature>
<feature type="glycosylation site" description="N-linked (GlcNAc...) asparagine" evidence="2">
    <location>
        <position position="650"/>
    </location>
</feature>
<feature type="glycosylation site" description="N-linked (GlcNAc...) asparagine" evidence="2">
    <location>
        <position position="679"/>
    </location>
</feature>
<feature type="glycosylation site" description="N-linked (GlcNAc...) asparagine" evidence="2">
    <location>
        <position position="694"/>
    </location>
</feature>
<feature type="glycosylation site" description="N-linked (GlcNAc...) asparagine" evidence="2">
    <location>
        <position position="708"/>
    </location>
</feature>
<feature type="glycosylation site" description="N-linked (GlcNAc...) asparagine" evidence="2">
    <location>
        <position position="729"/>
    </location>
</feature>
<feature type="glycosylation site" description="N-linked (GlcNAc...) asparagine" evidence="2">
    <location>
        <position position="845"/>
    </location>
</feature>
<feature type="glycosylation site" description="N-linked (GlcNAc...) asparagine" evidence="2">
    <location>
        <position position="951"/>
    </location>
</feature>
<feature type="disulfide bond" description="Interchain" evidence="1">
    <location>
        <position position="113"/>
    </location>
</feature>
<feature type="sequence conflict" description="In Ref. 3; AAQ89125." evidence="5" ref="3">
    <original>N</original>
    <variation>Y</variation>
    <location>
        <position position="1003"/>
    </location>
</feature>
<protein>
    <recommendedName>
        <fullName>Thyrotropin-releasing hormone-degrading ectoenzyme</fullName>
        <shortName>TRH-DE</shortName>
        <shortName>TRH-degrading ectoenzyme</shortName>
        <ecNumber>3.4.19.6</ecNumber>
    </recommendedName>
    <alternativeName>
        <fullName>Pyroglutamyl-peptidase II</fullName>
        <shortName>PAP-II</shortName>
    </alternativeName>
    <alternativeName>
        <fullName>TRH-specific aminopeptidase</fullName>
    </alternativeName>
    <alternativeName>
        <fullName>Thyroliberinase</fullName>
    </alternativeName>
</protein>
<evidence type="ECO:0000250" key="1"/>
<evidence type="ECO:0000255" key="2"/>
<evidence type="ECO:0000255" key="3">
    <source>
        <dbReference type="PROSITE-ProRule" id="PRU10095"/>
    </source>
</evidence>
<evidence type="ECO:0000256" key="4">
    <source>
        <dbReference type="SAM" id="MobiDB-lite"/>
    </source>
</evidence>
<evidence type="ECO:0000305" key="5"/>
<name>TRHDE_HUMAN</name>
<organism>
    <name type="scientific">Homo sapiens</name>
    <name type="common">Human</name>
    <dbReference type="NCBI Taxonomy" id="9606"/>
    <lineage>
        <taxon>Eukaryota</taxon>
        <taxon>Metazoa</taxon>
        <taxon>Chordata</taxon>
        <taxon>Craniata</taxon>
        <taxon>Vertebrata</taxon>
        <taxon>Euteleostomi</taxon>
        <taxon>Mammalia</taxon>
        <taxon>Eutheria</taxon>
        <taxon>Euarchontoglires</taxon>
        <taxon>Primates</taxon>
        <taxon>Haplorrhini</taxon>
        <taxon>Catarrhini</taxon>
        <taxon>Hominidae</taxon>
        <taxon>Homo</taxon>
    </lineage>
</organism>
<comment type="function">
    <text>Specific inactivation of TRH after its release.</text>
</comment>
<comment type="catalytic activity">
    <reaction>
        <text>Release of the N-terminal pyroglutamyl group from pGlu-|-His-Xaa tripeptides and pGlu-|-His-Xaa-Gly tetrapeptides.</text>
        <dbReference type="EC" id="3.4.19.6"/>
    </reaction>
</comment>
<comment type="cofactor">
    <cofactor evidence="1">
        <name>Zn(2+)</name>
        <dbReference type="ChEBI" id="CHEBI:29105"/>
    </cofactor>
    <text evidence="1">Binds 1 zinc ion per subunit.</text>
</comment>
<comment type="subunit">
    <text evidence="1">Homodimer; disulfide-linked.</text>
</comment>
<comment type="subcellular location">
    <subcellularLocation>
        <location>Membrane</location>
        <topology>Single-pass type II membrane protein</topology>
    </subcellularLocation>
</comment>
<comment type="tissue specificity">
    <text>Predominantly expressed in brain.</text>
</comment>
<comment type="similarity">
    <text evidence="5">Belongs to the peptidase M1 family.</text>
</comment>
<comment type="sequence caution" evidence="5">
    <conflict type="erroneous initiation">
        <sequence resource="EMBL-CDS" id="AAF13141"/>
    </conflict>
    <text>Truncated N-terminus.</text>
</comment>
<comment type="sequence caution" evidence="5">
    <conflict type="erroneous initiation">
        <sequence resource="EMBL-CDS" id="AAI42707"/>
    </conflict>
    <text>Truncated N-terminus.</text>
</comment>
<comment type="sequence caution" evidence="5">
    <conflict type="erroneous initiation">
        <sequence resource="EMBL-CDS" id="AAI50182"/>
    </conflict>
    <text>Truncated N-terminus.</text>
</comment>
<comment type="sequence caution" evidence="5">
    <conflict type="erroneous initiation">
        <sequence resource="EMBL-CDS" id="AAQ89125"/>
    </conflict>
    <text>Truncated N-terminus.</text>
</comment>
<reference key="1">
    <citation type="journal article" date="2006" name="Nature">
        <title>The finished DNA sequence of human chromosome 12.</title>
        <authorList>
            <person name="Scherer S.E."/>
            <person name="Muzny D.M."/>
            <person name="Buhay C.J."/>
            <person name="Chen R."/>
            <person name="Cree A."/>
            <person name="Ding Y."/>
            <person name="Dugan-Rocha S."/>
            <person name="Gill R."/>
            <person name="Gunaratne P."/>
            <person name="Harris R.A."/>
            <person name="Hawes A.C."/>
            <person name="Hernandez J."/>
            <person name="Hodgson A.V."/>
            <person name="Hume J."/>
            <person name="Jackson A."/>
            <person name="Khan Z.M."/>
            <person name="Kovar-Smith C."/>
            <person name="Lewis L.R."/>
            <person name="Lozado R.J."/>
            <person name="Metzker M.L."/>
            <person name="Milosavljevic A."/>
            <person name="Miner G.R."/>
            <person name="Montgomery K.T."/>
            <person name="Morgan M.B."/>
            <person name="Nazareth L.V."/>
            <person name="Scott G."/>
            <person name="Sodergren E."/>
            <person name="Song X.-Z."/>
            <person name="Steffen D."/>
            <person name="Lovering R.C."/>
            <person name="Wheeler D.A."/>
            <person name="Worley K.C."/>
            <person name="Yuan Y."/>
            <person name="Zhang Z."/>
            <person name="Adams C.Q."/>
            <person name="Ansari-Lari M.A."/>
            <person name="Ayele M."/>
            <person name="Brown M.J."/>
            <person name="Chen G."/>
            <person name="Chen Z."/>
            <person name="Clerc-Blankenburg K.P."/>
            <person name="Davis C."/>
            <person name="Delgado O."/>
            <person name="Dinh H.H."/>
            <person name="Draper H."/>
            <person name="Gonzalez-Garay M.L."/>
            <person name="Havlak P."/>
            <person name="Jackson L.R."/>
            <person name="Jacob L.S."/>
            <person name="Kelly S.H."/>
            <person name="Li L."/>
            <person name="Li Z."/>
            <person name="Liu J."/>
            <person name="Liu W."/>
            <person name="Lu J."/>
            <person name="Maheshwari M."/>
            <person name="Nguyen B.-V."/>
            <person name="Okwuonu G.O."/>
            <person name="Pasternak S."/>
            <person name="Perez L.M."/>
            <person name="Plopper F.J.H."/>
            <person name="Santibanez J."/>
            <person name="Shen H."/>
            <person name="Tabor P.E."/>
            <person name="Verduzco D."/>
            <person name="Waldron L."/>
            <person name="Wang Q."/>
            <person name="Williams G.A."/>
            <person name="Zhang J."/>
            <person name="Zhou J."/>
            <person name="Allen C.C."/>
            <person name="Amin A.G."/>
            <person name="Anyalebechi V."/>
            <person name="Bailey M."/>
            <person name="Barbaria J.A."/>
            <person name="Bimage K.E."/>
            <person name="Bryant N.P."/>
            <person name="Burch P.E."/>
            <person name="Burkett C.E."/>
            <person name="Burrell K.L."/>
            <person name="Calderon E."/>
            <person name="Cardenas V."/>
            <person name="Carter K."/>
            <person name="Casias K."/>
            <person name="Cavazos I."/>
            <person name="Cavazos S.R."/>
            <person name="Ceasar H."/>
            <person name="Chacko J."/>
            <person name="Chan S.N."/>
            <person name="Chavez D."/>
            <person name="Christopoulos C."/>
            <person name="Chu J."/>
            <person name="Cockrell R."/>
            <person name="Cox C.D."/>
            <person name="Dang M."/>
            <person name="Dathorne S.R."/>
            <person name="David R."/>
            <person name="Davis C.M."/>
            <person name="Davy-Carroll L."/>
            <person name="Deshazo D.R."/>
            <person name="Donlin J.E."/>
            <person name="D'Souza L."/>
            <person name="Eaves K.A."/>
            <person name="Egan A."/>
            <person name="Emery-Cohen A.J."/>
            <person name="Escotto M."/>
            <person name="Flagg N."/>
            <person name="Forbes L.D."/>
            <person name="Gabisi A.M."/>
            <person name="Garza M."/>
            <person name="Hamilton C."/>
            <person name="Henderson N."/>
            <person name="Hernandez O."/>
            <person name="Hines S."/>
            <person name="Hogues M.E."/>
            <person name="Huang M."/>
            <person name="Idlebird D.G."/>
            <person name="Johnson R."/>
            <person name="Jolivet A."/>
            <person name="Jones S."/>
            <person name="Kagan R."/>
            <person name="King L.M."/>
            <person name="Leal B."/>
            <person name="Lebow H."/>
            <person name="Lee S."/>
            <person name="LeVan J.M."/>
            <person name="Lewis L.C."/>
            <person name="London P."/>
            <person name="Lorensuhewa L.M."/>
            <person name="Loulseged H."/>
            <person name="Lovett D.A."/>
            <person name="Lucier A."/>
            <person name="Lucier R.L."/>
            <person name="Ma J."/>
            <person name="Madu R.C."/>
            <person name="Mapua P."/>
            <person name="Martindale A.D."/>
            <person name="Martinez E."/>
            <person name="Massey E."/>
            <person name="Mawhiney S."/>
            <person name="Meador M.G."/>
            <person name="Mendez S."/>
            <person name="Mercado C."/>
            <person name="Mercado I.C."/>
            <person name="Merritt C.E."/>
            <person name="Miner Z.L."/>
            <person name="Minja E."/>
            <person name="Mitchell T."/>
            <person name="Mohabbat F."/>
            <person name="Mohabbat K."/>
            <person name="Montgomery B."/>
            <person name="Moore N."/>
            <person name="Morris S."/>
            <person name="Munidasa M."/>
            <person name="Ngo R.N."/>
            <person name="Nguyen N.B."/>
            <person name="Nickerson E."/>
            <person name="Nwaokelemeh O.O."/>
            <person name="Nwokenkwo S."/>
            <person name="Obregon M."/>
            <person name="Oguh M."/>
            <person name="Oragunye N."/>
            <person name="Oviedo R.J."/>
            <person name="Parish B.J."/>
            <person name="Parker D.N."/>
            <person name="Parrish J."/>
            <person name="Parks K.L."/>
            <person name="Paul H.A."/>
            <person name="Payton B.A."/>
            <person name="Perez A."/>
            <person name="Perrin W."/>
            <person name="Pickens A."/>
            <person name="Primus E.L."/>
            <person name="Pu L.-L."/>
            <person name="Puazo M."/>
            <person name="Quiles M.M."/>
            <person name="Quiroz J.B."/>
            <person name="Rabata D."/>
            <person name="Reeves K."/>
            <person name="Ruiz S.J."/>
            <person name="Shao H."/>
            <person name="Sisson I."/>
            <person name="Sonaike T."/>
            <person name="Sorelle R.P."/>
            <person name="Sutton A.E."/>
            <person name="Svatek A.F."/>
            <person name="Svetz L.A."/>
            <person name="Tamerisa K.S."/>
            <person name="Taylor T.R."/>
            <person name="Teague B."/>
            <person name="Thomas N."/>
            <person name="Thorn R.D."/>
            <person name="Trejos Z.Y."/>
            <person name="Trevino B.K."/>
            <person name="Ukegbu O.N."/>
            <person name="Urban J.B."/>
            <person name="Vasquez L.I."/>
            <person name="Vera V.A."/>
            <person name="Villasana D.M."/>
            <person name="Wang L."/>
            <person name="Ward-Moore S."/>
            <person name="Warren J.T."/>
            <person name="Wei X."/>
            <person name="White F."/>
            <person name="Williamson A.L."/>
            <person name="Wleczyk R."/>
            <person name="Wooden H.S."/>
            <person name="Wooden S.H."/>
            <person name="Yen J."/>
            <person name="Yoon L."/>
            <person name="Yoon V."/>
            <person name="Zorrilla S.E."/>
            <person name="Nelson D."/>
            <person name="Kucherlapati R."/>
            <person name="Weinstock G."/>
            <person name="Gibbs R.A."/>
        </authorList>
    </citation>
    <scope>NUCLEOTIDE SEQUENCE [LARGE SCALE GENOMIC DNA]</scope>
</reference>
<reference key="2">
    <citation type="journal article" date="1999" name="Eur. J. Biochem.">
        <title>Human TRH-degrading ectoenzyme cDNA cloning, functional expression, genomic structure and chromosomal assignment.</title>
        <authorList>
            <person name="Schomburg L."/>
            <person name="Turwitt S."/>
            <person name="Prescher G."/>
            <person name="Lohmann D."/>
            <person name="Horsthemke B."/>
            <person name="Bauer K."/>
        </authorList>
    </citation>
    <scope>NUCLEOTIDE SEQUENCE [MRNA] OF 14-1069</scope>
    <source>
        <tissue>Lung</tissue>
    </source>
</reference>
<reference key="3">
    <citation type="journal article" date="2003" name="Genome Res.">
        <title>The secreted protein discovery initiative (SPDI), a large-scale effort to identify novel human secreted and transmembrane proteins: a bioinformatics assessment.</title>
        <authorList>
            <person name="Clark H.F."/>
            <person name="Gurney A.L."/>
            <person name="Abaya E."/>
            <person name="Baker K."/>
            <person name="Baldwin D.T."/>
            <person name="Brush J."/>
            <person name="Chen J."/>
            <person name="Chow B."/>
            <person name="Chui C."/>
            <person name="Crowley C."/>
            <person name="Currell B."/>
            <person name="Deuel B."/>
            <person name="Dowd P."/>
            <person name="Eaton D."/>
            <person name="Foster J.S."/>
            <person name="Grimaldi C."/>
            <person name="Gu Q."/>
            <person name="Hass P.E."/>
            <person name="Heldens S."/>
            <person name="Huang A."/>
            <person name="Kim H.S."/>
            <person name="Klimowski L."/>
            <person name="Jin Y."/>
            <person name="Johnson S."/>
            <person name="Lee J."/>
            <person name="Lewis L."/>
            <person name="Liao D."/>
            <person name="Mark M.R."/>
            <person name="Robbie E."/>
            <person name="Sanchez C."/>
            <person name="Schoenfeld J."/>
            <person name="Seshagiri S."/>
            <person name="Simmons L."/>
            <person name="Singh J."/>
            <person name="Smith V."/>
            <person name="Stinson J."/>
            <person name="Vagts A."/>
            <person name="Vandlen R.L."/>
            <person name="Watanabe C."/>
            <person name="Wieand D."/>
            <person name="Woods K."/>
            <person name="Xie M.-H."/>
            <person name="Yansura D.G."/>
            <person name="Yi S."/>
            <person name="Yu G."/>
            <person name="Yuan J."/>
            <person name="Zhang M."/>
            <person name="Zhang Z."/>
            <person name="Goddard A.D."/>
            <person name="Wood W.I."/>
            <person name="Godowski P.J."/>
            <person name="Gray A.M."/>
        </authorList>
    </citation>
    <scope>NUCLEOTIDE SEQUENCE [LARGE SCALE MRNA] OF 39-1069</scope>
</reference>
<reference key="4">
    <citation type="journal article" date="2004" name="Genome Res.">
        <title>The status, quality, and expansion of the NIH full-length cDNA project: the Mammalian Gene Collection (MGC).</title>
        <authorList>
            <consortium name="The MGC Project Team"/>
        </authorList>
    </citation>
    <scope>NUCLEOTIDE SEQUENCE [LARGE SCALE MRNA] OF 36-1069</scope>
</reference>
<accession>Q9UKU6</accession>
<accession>A5PL19</accession>
<accession>H0YHU0</accession>
<accession>Q6UWJ4</accession>
<dbReference type="EC" id="3.4.19.6"/>
<dbReference type="EMBL" id="AC078921">
    <property type="status" value="NOT_ANNOTATED_CDS"/>
    <property type="molecule type" value="Genomic_DNA"/>
</dbReference>
<dbReference type="EMBL" id="AC087886">
    <property type="status" value="NOT_ANNOTATED_CDS"/>
    <property type="molecule type" value="Genomic_DNA"/>
</dbReference>
<dbReference type="EMBL" id="AC016256">
    <property type="status" value="NOT_ANNOTATED_CDS"/>
    <property type="molecule type" value="Genomic_DNA"/>
</dbReference>
<dbReference type="EMBL" id="AC133480">
    <property type="status" value="NOT_ANNOTATED_CDS"/>
    <property type="molecule type" value="Genomic_DNA"/>
</dbReference>
<dbReference type="EMBL" id="AC108720">
    <property type="status" value="NOT_ANNOTATED_CDS"/>
    <property type="molecule type" value="Genomic_DNA"/>
</dbReference>
<dbReference type="EMBL" id="KF455657">
    <property type="status" value="NOT_ANNOTATED_CDS"/>
    <property type="molecule type" value="Genomic_DNA"/>
</dbReference>
<dbReference type="EMBL" id="KF455667">
    <property type="status" value="NOT_ANNOTATED_CDS"/>
    <property type="molecule type" value="Genomic_DNA"/>
</dbReference>
<dbReference type="EMBL" id="AF126372">
    <property type="protein sequence ID" value="AAF13141.1"/>
    <property type="status" value="ALT_INIT"/>
    <property type="molecule type" value="mRNA"/>
</dbReference>
<dbReference type="EMBL" id="AY358765">
    <property type="protein sequence ID" value="AAQ89125.1"/>
    <property type="status" value="ALT_INIT"/>
    <property type="molecule type" value="mRNA"/>
</dbReference>
<dbReference type="EMBL" id="BC142706">
    <property type="protein sequence ID" value="AAI42707.1"/>
    <property type="status" value="ALT_INIT"/>
    <property type="molecule type" value="mRNA"/>
</dbReference>
<dbReference type="EMBL" id="BC150181">
    <property type="protein sequence ID" value="AAI50182.1"/>
    <property type="status" value="ALT_INIT"/>
    <property type="molecule type" value="mRNA"/>
</dbReference>
<dbReference type="CCDS" id="CCDS9004.2"/>
<dbReference type="RefSeq" id="NP_037513.2">
    <property type="nucleotide sequence ID" value="NM_013381.3"/>
</dbReference>
<dbReference type="SMR" id="Q9UKU6"/>
<dbReference type="BioGRID" id="118990">
    <property type="interactions" value="135"/>
</dbReference>
<dbReference type="FunCoup" id="Q9UKU6">
    <property type="interactions" value="218"/>
</dbReference>
<dbReference type="IntAct" id="Q9UKU6">
    <property type="interactions" value="24"/>
</dbReference>
<dbReference type="MINT" id="Q9UKU6"/>
<dbReference type="STRING" id="9606.ENSP00000261180"/>
<dbReference type="ChEMBL" id="CHEMBL3886123"/>
<dbReference type="MEROPS" id="M01.008"/>
<dbReference type="GlyCosmos" id="Q9UKU6">
    <property type="glycosylation" value="13 sites, 1 glycan"/>
</dbReference>
<dbReference type="GlyGen" id="Q9UKU6">
    <property type="glycosylation" value="13 sites"/>
</dbReference>
<dbReference type="iPTMnet" id="Q9UKU6"/>
<dbReference type="PhosphoSitePlus" id="Q9UKU6"/>
<dbReference type="BioMuta" id="TRHDE"/>
<dbReference type="DMDM" id="11387208"/>
<dbReference type="jPOST" id="Q9UKU6"/>
<dbReference type="MassIVE" id="Q9UKU6"/>
<dbReference type="PaxDb" id="9606-ENSP00000261180"/>
<dbReference type="PeptideAtlas" id="Q9UKU6"/>
<dbReference type="ProteomicsDB" id="38812"/>
<dbReference type="ProteomicsDB" id="84878"/>
<dbReference type="Antibodypedia" id="52788">
    <property type="antibodies" value="82 antibodies from 14 providers"/>
</dbReference>
<dbReference type="DNASU" id="29953"/>
<dbReference type="Ensembl" id="ENST00000261180.10">
    <property type="protein sequence ID" value="ENSP00000261180.5"/>
    <property type="gene ID" value="ENSG00000072657.10"/>
</dbReference>
<dbReference type="GeneID" id="29953"/>
<dbReference type="KEGG" id="hsa:29953"/>
<dbReference type="MANE-Select" id="ENST00000261180.10">
    <property type="protein sequence ID" value="ENSP00000261180.5"/>
    <property type="RefSeq nucleotide sequence ID" value="NM_013381.3"/>
    <property type="RefSeq protein sequence ID" value="NP_037513.2"/>
</dbReference>
<dbReference type="UCSC" id="uc001sxa.4">
    <property type="organism name" value="human"/>
</dbReference>
<dbReference type="UCSC" id="uc058raf.1">
    <property type="organism name" value="human"/>
</dbReference>
<dbReference type="AGR" id="HGNC:30748"/>
<dbReference type="CTD" id="29953"/>
<dbReference type="DisGeNET" id="29953"/>
<dbReference type="GeneCards" id="TRHDE"/>
<dbReference type="HGNC" id="HGNC:30748">
    <property type="gene designation" value="TRHDE"/>
</dbReference>
<dbReference type="HPA" id="ENSG00000072657">
    <property type="expression patterns" value="Tissue enhanced (adipose tissue, pancreas)"/>
</dbReference>
<dbReference type="MIM" id="606950">
    <property type="type" value="gene"/>
</dbReference>
<dbReference type="neXtProt" id="NX_Q9UKU6"/>
<dbReference type="OpenTargets" id="ENSG00000072657"/>
<dbReference type="PharmGKB" id="PA142670702"/>
<dbReference type="VEuPathDB" id="HostDB:ENSG00000072657"/>
<dbReference type="eggNOG" id="KOG1046">
    <property type="taxonomic scope" value="Eukaryota"/>
</dbReference>
<dbReference type="GeneTree" id="ENSGT00940000155878"/>
<dbReference type="HOGENOM" id="CLU_003705_2_2_1"/>
<dbReference type="InParanoid" id="Q9UKU6"/>
<dbReference type="OrthoDB" id="6750768at2759"/>
<dbReference type="PAN-GO" id="Q9UKU6">
    <property type="GO annotations" value="9 GO annotations based on evolutionary models"/>
</dbReference>
<dbReference type="PhylomeDB" id="Q9UKU6"/>
<dbReference type="TreeFam" id="TF300395"/>
<dbReference type="PathwayCommons" id="Q9UKU6"/>
<dbReference type="SignaLink" id="Q9UKU6"/>
<dbReference type="BioGRID-ORCS" id="29953">
    <property type="hits" value="12 hits in 1152 CRISPR screens"/>
</dbReference>
<dbReference type="ChiTaRS" id="TRHDE">
    <property type="organism name" value="human"/>
</dbReference>
<dbReference type="GenomeRNAi" id="29953"/>
<dbReference type="Pharos" id="Q9UKU6">
    <property type="development level" value="Tbio"/>
</dbReference>
<dbReference type="PRO" id="PR:Q9UKU6"/>
<dbReference type="Proteomes" id="UP000005640">
    <property type="component" value="Chromosome 12"/>
</dbReference>
<dbReference type="RNAct" id="Q9UKU6">
    <property type="molecule type" value="protein"/>
</dbReference>
<dbReference type="Bgee" id="ENSG00000072657">
    <property type="expression patterns" value="Expressed in jejunal mucosa and 141 other cell types or tissues"/>
</dbReference>
<dbReference type="ExpressionAtlas" id="Q9UKU6">
    <property type="expression patterns" value="baseline and differential"/>
</dbReference>
<dbReference type="GO" id="GO:0005737">
    <property type="term" value="C:cytoplasm"/>
    <property type="evidence" value="ECO:0000318"/>
    <property type="project" value="GO_Central"/>
</dbReference>
<dbReference type="GO" id="GO:0070062">
    <property type="term" value="C:extracellular exosome"/>
    <property type="evidence" value="ECO:0007005"/>
    <property type="project" value="UniProtKB"/>
</dbReference>
<dbReference type="GO" id="GO:0005615">
    <property type="term" value="C:extracellular space"/>
    <property type="evidence" value="ECO:0000318"/>
    <property type="project" value="GO_Central"/>
</dbReference>
<dbReference type="GO" id="GO:0016020">
    <property type="term" value="C:membrane"/>
    <property type="evidence" value="ECO:0000318"/>
    <property type="project" value="GO_Central"/>
</dbReference>
<dbReference type="GO" id="GO:0005886">
    <property type="term" value="C:plasma membrane"/>
    <property type="evidence" value="ECO:0000304"/>
    <property type="project" value="ProtInc"/>
</dbReference>
<dbReference type="GO" id="GO:0004177">
    <property type="term" value="F:aminopeptidase activity"/>
    <property type="evidence" value="ECO:0000304"/>
    <property type="project" value="ProtInc"/>
</dbReference>
<dbReference type="GO" id="GO:0070006">
    <property type="term" value="F:metalloaminopeptidase activity"/>
    <property type="evidence" value="ECO:0000318"/>
    <property type="project" value="GO_Central"/>
</dbReference>
<dbReference type="GO" id="GO:0042277">
    <property type="term" value="F:peptide binding"/>
    <property type="evidence" value="ECO:0000318"/>
    <property type="project" value="GO_Central"/>
</dbReference>
<dbReference type="GO" id="GO:0016920">
    <property type="term" value="F:pyroglutamyl-peptidase activity"/>
    <property type="evidence" value="ECO:0007669"/>
    <property type="project" value="UniProtKB-EC"/>
</dbReference>
<dbReference type="GO" id="GO:0008270">
    <property type="term" value="F:zinc ion binding"/>
    <property type="evidence" value="ECO:0000318"/>
    <property type="project" value="GO_Central"/>
</dbReference>
<dbReference type="GO" id="GO:0007267">
    <property type="term" value="P:cell-cell signaling"/>
    <property type="evidence" value="ECO:0000304"/>
    <property type="project" value="ProtInc"/>
</dbReference>
<dbReference type="GO" id="GO:0043171">
    <property type="term" value="P:peptide catabolic process"/>
    <property type="evidence" value="ECO:0000318"/>
    <property type="project" value="GO_Central"/>
</dbReference>
<dbReference type="GO" id="GO:0006508">
    <property type="term" value="P:proteolysis"/>
    <property type="evidence" value="ECO:0000318"/>
    <property type="project" value="GO_Central"/>
</dbReference>
<dbReference type="GO" id="GO:0007165">
    <property type="term" value="P:signal transduction"/>
    <property type="evidence" value="ECO:0000304"/>
    <property type="project" value="ProtInc"/>
</dbReference>
<dbReference type="CDD" id="cd09601">
    <property type="entry name" value="M1_APN-Q_like"/>
    <property type="match status" value="1"/>
</dbReference>
<dbReference type="FunFam" id="2.60.40.1910:FF:000006">
    <property type="entry name" value="Aminopeptidase"/>
    <property type="match status" value="1"/>
</dbReference>
<dbReference type="FunFam" id="1.25.50.20:FF:000005">
    <property type="entry name" value="Aminopeptidase N-like protein"/>
    <property type="match status" value="1"/>
</dbReference>
<dbReference type="FunFam" id="1.10.390.10:FF:000039">
    <property type="entry name" value="thyrotropin-releasing hormone-degrading ectoenzyme"/>
    <property type="match status" value="1"/>
</dbReference>
<dbReference type="FunFam" id="2.60.40.1730:FF:000007">
    <property type="entry name" value="thyrotropin-releasing hormone-degrading ectoenzyme"/>
    <property type="match status" value="1"/>
</dbReference>
<dbReference type="Gene3D" id="1.25.50.20">
    <property type="match status" value="1"/>
</dbReference>
<dbReference type="Gene3D" id="2.60.40.1910">
    <property type="match status" value="1"/>
</dbReference>
<dbReference type="Gene3D" id="1.10.390.10">
    <property type="entry name" value="Neutral Protease Domain 2"/>
    <property type="match status" value="1"/>
</dbReference>
<dbReference type="Gene3D" id="2.60.40.1730">
    <property type="entry name" value="tricorn interacting facor f3 domain"/>
    <property type="match status" value="1"/>
</dbReference>
<dbReference type="InterPro" id="IPR045357">
    <property type="entry name" value="Aminopeptidase_N-like_N"/>
</dbReference>
<dbReference type="InterPro" id="IPR042097">
    <property type="entry name" value="Aminopeptidase_N-like_N_sf"/>
</dbReference>
<dbReference type="InterPro" id="IPR024571">
    <property type="entry name" value="ERAP1-like_C_dom"/>
</dbReference>
<dbReference type="InterPro" id="IPR034016">
    <property type="entry name" value="M1_APN-typ"/>
</dbReference>
<dbReference type="InterPro" id="IPR001930">
    <property type="entry name" value="Peptidase_M1"/>
</dbReference>
<dbReference type="InterPro" id="IPR050344">
    <property type="entry name" value="Peptidase_M1_aminopeptidases"/>
</dbReference>
<dbReference type="InterPro" id="IPR014782">
    <property type="entry name" value="Peptidase_M1_dom"/>
</dbReference>
<dbReference type="InterPro" id="IPR027268">
    <property type="entry name" value="Peptidase_M4/M1_CTD_sf"/>
</dbReference>
<dbReference type="PANTHER" id="PTHR11533">
    <property type="entry name" value="PROTEASE M1 ZINC METALLOPROTEASE"/>
    <property type="match status" value="1"/>
</dbReference>
<dbReference type="PANTHER" id="PTHR11533:SF294">
    <property type="entry name" value="THYROTROPIN-RELEASING HORMONE-DEGRADING ECTOENZYME"/>
    <property type="match status" value="1"/>
</dbReference>
<dbReference type="Pfam" id="PF11838">
    <property type="entry name" value="ERAP1_C"/>
    <property type="match status" value="1"/>
</dbReference>
<dbReference type="Pfam" id="PF01433">
    <property type="entry name" value="Peptidase_M1"/>
    <property type="match status" value="1"/>
</dbReference>
<dbReference type="Pfam" id="PF17900">
    <property type="entry name" value="Peptidase_M1_N"/>
    <property type="match status" value="1"/>
</dbReference>
<dbReference type="PRINTS" id="PR00756">
    <property type="entry name" value="ALADIPTASE"/>
</dbReference>
<dbReference type="SUPFAM" id="SSF63737">
    <property type="entry name" value="Leukotriene A4 hydrolase N-terminal domain"/>
    <property type="match status" value="1"/>
</dbReference>
<dbReference type="SUPFAM" id="SSF55486">
    <property type="entry name" value="Metalloproteases ('zincins'), catalytic domain"/>
    <property type="match status" value="1"/>
</dbReference>
<dbReference type="PROSITE" id="PS00142">
    <property type="entry name" value="ZINC_PROTEASE"/>
    <property type="match status" value="1"/>
</dbReference>
<keyword id="KW-0031">Aminopeptidase</keyword>
<keyword id="KW-1015">Disulfide bond</keyword>
<keyword id="KW-0325">Glycoprotein</keyword>
<keyword id="KW-0378">Hydrolase</keyword>
<keyword id="KW-0472">Membrane</keyword>
<keyword id="KW-0479">Metal-binding</keyword>
<keyword id="KW-0482">Metalloprotease</keyword>
<keyword id="KW-0645">Protease</keyword>
<keyword id="KW-1267">Proteomics identification</keyword>
<keyword id="KW-1185">Reference proteome</keyword>
<keyword id="KW-0735">Signal-anchor</keyword>
<keyword id="KW-0812">Transmembrane</keyword>
<keyword id="KW-1133">Transmembrane helix</keyword>
<keyword id="KW-0862">Zinc</keyword>